<evidence type="ECO:0000269" key="1">
    <source>
    </source>
</evidence>
<evidence type="ECO:0000303" key="2">
    <source>
    </source>
</evidence>
<evidence type="ECO:0000305" key="3"/>
<evidence type="ECO:0007744" key="4">
    <source>
        <dbReference type="PDB" id="1SG7"/>
    </source>
</evidence>
<evidence type="ECO:0007829" key="5">
    <source>
        <dbReference type="PDB" id="1SG7"/>
    </source>
</evidence>
<gene>
    <name evidence="2" type="primary">chaB</name>
    <name type="ordered locus">Z1992</name>
    <name type="ordered locus">ECs1722</name>
</gene>
<sequence length="76" mass="8945">MPYKTKSDLPESVKHVLPSHAQDIYKEAFNSAWDQYKDKEDRRDDASREETAHKVAWAAVKHEYAKGDDDKWHKKS</sequence>
<name>CHAB_ECO57</name>
<comment type="function">
    <text evidence="2">Might be a regulator of the sodium-potassium/proton antiporter ChaA.</text>
</comment>
<comment type="subunit">
    <text evidence="1">Monomer.</text>
</comment>
<comment type="similarity">
    <text evidence="3">Belongs to the ChaB family.</text>
</comment>
<protein>
    <recommendedName>
        <fullName>Putative cation transport regulator ChaB</fullName>
    </recommendedName>
</protein>
<accession>P0AE65</accession>
<accession>P39162</accession>
<proteinExistence type="evidence at protein level"/>
<organism>
    <name type="scientific">Escherichia coli O157:H7</name>
    <dbReference type="NCBI Taxonomy" id="83334"/>
    <lineage>
        <taxon>Bacteria</taxon>
        <taxon>Pseudomonadati</taxon>
        <taxon>Pseudomonadota</taxon>
        <taxon>Gammaproteobacteria</taxon>
        <taxon>Enterobacterales</taxon>
        <taxon>Enterobacteriaceae</taxon>
        <taxon>Escherichia</taxon>
    </lineage>
</organism>
<keyword id="KW-0002">3D-structure</keyword>
<keyword id="KW-1185">Reference proteome</keyword>
<keyword id="KW-0804">Transcription</keyword>
<keyword id="KW-0805">Transcription regulation</keyword>
<dbReference type="EMBL" id="AE005174">
    <property type="protein sequence ID" value="AAG56077.1"/>
    <property type="molecule type" value="Genomic_DNA"/>
</dbReference>
<dbReference type="EMBL" id="BA000007">
    <property type="protein sequence ID" value="BAB35145.1"/>
    <property type="molecule type" value="Genomic_DNA"/>
</dbReference>
<dbReference type="PIR" id="A85702">
    <property type="entry name" value="A85702"/>
</dbReference>
<dbReference type="PIR" id="B90844">
    <property type="entry name" value="B90844"/>
</dbReference>
<dbReference type="RefSeq" id="NP_309749.1">
    <property type="nucleotide sequence ID" value="NC_002695.1"/>
</dbReference>
<dbReference type="RefSeq" id="WP_001146444.1">
    <property type="nucleotide sequence ID" value="NZ_VOAI01000031.1"/>
</dbReference>
<dbReference type="PDB" id="1SG7">
    <property type="method" value="NMR"/>
    <property type="chains" value="A=2-76"/>
</dbReference>
<dbReference type="PDBsum" id="1SG7"/>
<dbReference type="BMRB" id="P0AE65"/>
<dbReference type="SMR" id="P0AE65"/>
<dbReference type="STRING" id="155864.Z1992"/>
<dbReference type="GeneID" id="913139"/>
<dbReference type="GeneID" id="93775285"/>
<dbReference type="KEGG" id="ece:Z1992"/>
<dbReference type="KEGG" id="ecs:ECs_1722"/>
<dbReference type="PATRIC" id="fig|386585.9.peg.1822"/>
<dbReference type="eggNOG" id="COG4572">
    <property type="taxonomic scope" value="Bacteria"/>
</dbReference>
<dbReference type="HOGENOM" id="CLU_179907_0_0_6"/>
<dbReference type="OMA" id="KAFNSAW"/>
<dbReference type="EvolutionaryTrace" id="P0AE65"/>
<dbReference type="Proteomes" id="UP000000558">
    <property type="component" value="Chromosome"/>
</dbReference>
<dbReference type="Proteomes" id="UP000002519">
    <property type="component" value="Chromosome"/>
</dbReference>
<dbReference type="Gene3D" id="1.10.1740.70">
    <property type="entry name" value="ChaB"/>
    <property type="match status" value="1"/>
</dbReference>
<dbReference type="InterPro" id="IPR009317">
    <property type="entry name" value="ChaB"/>
</dbReference>
<dbReference type="InterPro" id="IPR037205">
    <property type="entry name" value="ChaB_sf"/>
</dbReference>
<dbReference type="NCBIfam" id="NF007136">
    <property type="entry name" value="PRK09582.1"/>
    <property type="match status" value="1"/>
</dbReference>
<dbReference type="Pfam" id="PF06150">
    <property type="entry name" value="ChaB"/>
    <property type="match status" value="1"/>
</dbReference>
<dbReference type="SUPFAM" id="SSF140376">
    <property type="entry name" value="ChaB-like"/>
    <property type="match status" value="1"/>
</dbReference>
<reference key="1">
    <citation type="journal article" date="2001" name="Nature">
        <title>Genome sequence of enterohaemorrhagic Escherichia coli O157:H7.</title>
        <authorList>
            <person name="Perna N.T."/>
            <person name="Plunkett G. III"/>
            <person name="Burland V."/>
            <person name="Mau B."/>
            <person name="Glasner J.D."/>
            <person name="Rose D.J."/>
            <person name="Mayhew G.F."/>
            <person name="Evans P.S."/>
            <person name="Gregor J."/>
            <person name="Kirkpatrick H.A."/>
            <person name="Posfai G."/>
            <person name="Hackett J."/>
            <person name="Klink S."/>
            <person name="Boutin A."/>
            <person name="Shao Y."/>
            <person name="Miller L."/>
            <person name="Grotbeck E.J."/>
            <person name="Davis N.W."/>
            <person name="Lim A."/>
            <person name="Dimalanta E.T."/>
            <person name="Potamousis K."/>
            <person name="Apodaca J."/>
            <person name="Anantharaman T.S."/>
            <person name="Lin J."/>
            <person name="Yen G."/>
            <person name="Schwartz D.C."/>
            <person name="Welch R.A."/>
            <person name="Blattner F.R."/>
        </authorList>
    </citation>
    <scope>NUCLEOTIDE SEQUENCE [LARGE SCALE GENOMIC DNA]</scope>
    <source>
        <strain>O157:H7 / EDL933 / ATCC 700927 / EHEC</strain>
    </source>
</reference>
<reference key="2">
    <citation type="journal article" date="2001" name="DNA Res.">
        <title>Complete genome sequence of enterohemorrhagic Escherichia coli O157:H7 and genomic comparison with a laboratory strain K-12.</title>
        <authorList>
            <person name="Hayashi T."/>
            <person name="Makino K."/>
            <person name="Ohnishi M."/>
            <person name="Kurokawa K."/>
            <person name="Ishii K."/>
            <person name="Yokoyama K."/>
            <person name="Han C.-G."/>
            <person name="Ohtsubo E."/>
            <person name="Nakayama K."/>
            <person name="Murata T."/>
            <person name="Tanaka M."/>
            <person name="Tobe T."/>
            <person name="Iida T."/>
            <person name="Takami H."/>
            <person name="Honda T."/>
            <person name="Sasakawa C."/>
            <person name="Ogasawara N."/>
            <person name="Yasunaga T."/>
            <person name="Kuhara S."/>
            <person name="Shiba T."/>
            <person name="Hattori M."/>
            <person name="Shinagawa H."/>
        </authorList>
    </citation>
    <scope>NUCLEOTIDE SEQUENCE [LARGE SCALE GENOMIC DNA]</scope>
    <source>
        <strain>O157:H7 / Sakai / RIMD 0509952 / EHEC</strain>
    </source>
</reference>
<reference evidence="4" key="3">
    <citation type="journal article" date="2004" name="BMC Struct. Biol.">
        <title>The solution structure of ChaB, a putative membrane ion antiporter regulator from Escherichia coli.</title>
        <authorList>
            <person name="Osborne M.J."/>
            <person name="Siddiqui N."/>
            <person name="Iannuzzi P."/>
            <person name="Gehring K."/>
        </authorList>
    </citation>
    <scope>STRUCTURE BY NMR OF 2-76</scope>
    <scope>POSSIBLE FUNCTION</scope>
    <scope>SUBUNIT</scope>
    <source>
        <strain>O157:H7 / EHEC</strain>
    </source>
</reference>
<feature type="chain" id="PRO_0000089633" description="Putative cation transport regulator ChaB">
    <location>
        <begin position="1"/>
        <end position="76"/>
    </location>
</feature>
<feature type="strand" evidence="5">
    <location>
        <begin position="4"/>
        <end position="6"/>
    </location>
</feature>
<feature type="helix" evidence="5">
    <location>
        <begin position="11"/>
        <end position="14"/>
    </location>
</feature>
<feature type="helix" evidence="5">
    <location>
        <begin position="20"/>
        <end position="35"/>
    </location>
</feature>
<feature type="strand" evidence="5">
    <location>
        <begin position="38"/>
        <end position="43"/>
    </location>
</feature>
<feature type="helix" evidence="5">
    <location>
        <begin position="45"/>
        <end position="63"/>
    </location>
</feature>
<feature type="strand" evidence="5">
    <location>
        <begin position="64"/>
        <end position="66"/>
    </location>
</feature>
<feature type="strand" evidence="5">
    <location>
        <begin position="68"/>
        <end position="70"/>
    </location>
</feature>
<feature type="strand" evidence="5">
    <location>
        <begin position="72"/>
        <end position="74"/>
    </location>
</feature>